<dbReference type="EC" id="1.5.1.5" evidence="1"/>
<dbReference type="EC" id="3.5.4.9" evidence="1"/>
<dbReference type="EMBL" id="CP000151">
    <property type="protein sequence ID" value="ABB09040.1"/>
    <property type="molecule type" value="Genomic_DNA"/>
</dbReference>
<dbReference type="RefSeq" id="WP_011352575.1">
    <property type="nucleotide sequence ID" value="NC_007510.1"/>
</dbReference>
<dbReference type="SMR" id="Q39ES6"/>
<dbReference type="GeneID" id="45095326"/>
<dbReference type="KEGG" id="bur:Bcep18194_A5446"/>
<dbReference type="PATRIC" id="fig|482957.22.peg.2399"/>
<dbReference type="HOGENOM" id="CLU_034045_2_1_4"/>
<dbReference type="UniPathway" id="UPA00193"/>
<dbReference type="Proteomes" id="UP000002705">
    <property type="component" value="Chromosome 1"/>
</dbReference>
<dbReference type="GO" id="GO:0005829">
    <property type="term" value="C:cytosol"/>
    <property type="evidence" value="ECO:0007669"/>
    <property type="project" value="TreeGrafter"/>
</dbReference>
<dbReference type="GO" id="GO:0004477">
    <property type="term" value="F:methenyltetrahydrofolate cyclohydrolase activity"/>
    <property type="evidence" value="ECO:0007669"/>
    <property type="project" value="UniProtKB-UniRule"/>
</dbReference>
<dbReference type="GO" id="GO:0004488">
    <property type="term" value="F:methylenetetrahydrofolate dehydrogenase (NADP+) activity"/>
    <property type="evidence" value="ECO:0007669"/>
    <property type="project" value="UniProtKB-UniRule"/>
</dbReference>
<dbReference type="GO" id="GO:0000105">
    <property type="term" value="P:L-histidine biosynthetic process"/>
    <property type="evidence" value="ECO:0007669"/>
    <property type="project" value="UniProtKB-KW"/>
</dbReference>
<dbReference type="GO" id="GO:0009086">
    <property type="term" value="P:methionine biosynthetic process"/>
    <property type="evidence" value="ECO:0007669"/>
    <property type="project" value="UniProtKB-KW"/>
</dbReference>
<dbReference type="GO" id="GO:0006164">
    <property type="term" value="P:purine nucleotide biosynthetic process"/>
    <property type="evidence" value="ECO:0007669"/>
    <property type="project" value="UniProtKB-KW"/>
</dbReference>
<dbReference type="GO" id="GO:0035999">
    <property type="term" value="P:tetrahydrofolate interconversion"/>
    <property type="evidence" value="ECO:0007669"/>
    <property type="project" value="UniProtKB-UniRule"/>
</dbReference>
<dbReference type="CDD" id="cd01080">
    <property type="entry name" value="NAD_bind_m-THF_DH_Cyclohyd"/>
    <property type="match status" value="1"/>
</dbReference>
<dbReference type="FunFam" id="3.40.50.720:FF:000094">
    <property type="entry name" value="Bifunctional protein FolD"/>
    <property type="match status" value="1"/>
</dbReference>
<dbReference type="FunFam" id="3.40.50.10860:FF:000005">
    <property type="entry name" value="C-1-tetrahydrofolate synthase, cytoplasmic, putative"/>
    <property type="match status" value="1"/>
</dbReference>
<dbReference type="Gene3D" id="3.40.50.10860">
    <property type="entry name" value="Leucine Dehydrogenase, chain A, domain 1"/>
    <property type="match status" value="1"/>
</dbReference>
<dbReference type="Gene3D" id="3.40.50.720">
    <property type="entry name" value="NAD(P)-binding Rossmann-like Domain"/>
    <property type="match status" value="1"/>
</dbReference>
<dbReference type="HAMAP" id="MF_01576">
    <property type="entry name" value="THF_DHG_CYH"/>
    <property type="match status" value="1"/>
</dbReference>
<dbReference type="InterPro" id="IPR046346">
    <property type="entry name" value="Aminoacid_DH-like_N_sf"/>
</dbReference>
<dbReference type="InterPro" id="IPR036291">
    <property type="entry name" value="NAD(P)-bd_dom_sf"/>
</dbReference>
<dbReference type="InterPro" id="IPR000672">
    <property type="entry name" value="THF_DH/CycHdrlase"/>
</dbReference>
<dbReference type="InterPro" id="IPR020630">
    <property type="entry name" value="THF_DH/CycHdrlase_cat_dom"/>
</dbReference>
<dbReference type="InterPro" id="IPR020867">
    <property type="entry name" value="THF_DH/CycHdrlase_CS"/>
</dbReference>
<dbReference type="InterPro" id="IPR020631">
    <property type="entry name" value="THF_DH/CycHdrlase_NAD-bd_dom"/>
</dbReference>
<dbReference type="NCBIfam" id="NF008058">
    <property type="entry name" value="PRK10792.1"/>
    <property type="match status" value="1"/>
</dbReference>
<dbReference type="NCBIfam" id="NF010783">
    <property type="entry name" value="PRK14186.1"/>
    <property type="match status" value="1"/>
</dbReference>
<dbReference type="NCBIfam" id="NF010786">
    <property type="entry name" value="PRK14189.1"/>
    <property type="match status" value="1"/>
</dbReference>
<dbReference type="PANTHER" id="PTHR48099:SF5">
    <property type="entry name" value="C-1-TETRAHYDROFOLATE SYNTHASE, CYTOPLASMIC"/>
    <property type="match status" value="1"/>
</dbReference>
<dbReference type="PANTHER" id="PTHR48099">
    <property type="entry name" value="C-1-TETRAHYDROFOLATE SYNTHASE, CYTOPLASMIC-RELATED"/>
    <property type="match status" value="1"/>
</dbReference>
<dbReference type="Pfam" id="PF00763">
    <property type="entry name" value="THF_DHG_CYH"/>
    <property type="match status" value="1"/>
</dbReference>
<dbReference type="Pfam" id="PF02882">
    <property type="entry name" value="THF_DHG_CYH_C"/>
    <property type="match status" value="1"/>
</dbReference>
<dbReference type="PRINTS" id="PR00085">
    <property type="entry name" value="THFDHDRGNASE"/>
</dbReference>
<dbReference type="SUPFAM" id="SSF53223">
    <property type="entry name" value="Aminoacid dehydrogenase-like, N-terminal domain"/>
    <property type="match status" value="1"/>
</dbReference>
<dbReference type="SUPFAM" id="SSF51735">
    <property type="entry name" value="NAD(P)-binding Rossmann-fold domains"/>
    <property type="match status" value="1"/>
</dbReference>
<dbReference type="PROSITE" id="PS00766">
    <property type="entry name" value="THF_DHG_CYH_1"/>
    <property type="match status" value="1"/>
</dbReference>
<dbReference type="PROSITE" id="PS00767">
    <property type="entry name" value="THF_DHG_CYH_2"/>
    <property type="match status" value="1"/>
</dbReference>
<comment type="function">
    <text evidence="1">Catalyzes the oxidation of 5,10-methylenetetrahydrofolate to 5,10-methenyltetrahydrofolate and then the hydrolysis of 5,10-methenyltetrahydrofolate to 10-formyltetrahydrofolate.</text>
</comment>
<comment type="catalytic activity">
    <reaction evidence="1">
        <text>(6R)-5,10-methylene-5,6,7,8-tetrahydrofolate + NADP(+) = (6R)-5,10-methenyltetrahydrofolate + NADPH</text>
        <dbReference type="Rhea" id="RHEA:22812"/>
        <dbReference type="ChEBI" id="CHEBI:15636"/>
        <dbReference type="ChEBI" id="CHEBI:57455"/>
        <dbReference type="ChEBI" id="CHEBI:57783"/>
        <dbReference type="ChEBI" id="CHEBI:58349"/>
        <dbReference type="EC" id="1.5.1.5"/>
    </reaction>
</comment>
<comment type="catalytic activity">
    <reaction evidence="1">
        <text>(6R)-5,10-methenyltetrahydrofolate + H2O = (6R)-10-formyltetrahydrofolate + H(+)</text>
        <dbReference type="Rhea" id="RHEA:23700"/>
        <dbReference type="ChEBI" id="CHEBI:15377"/>
        <dbReference type="ChEBI" id="CHEBI:15378"/>
        <dbReference type="ChEBI" id="CHEBI:57455"/>
        <dbReference type="ChEBI" id="CHEBI:195366"/>
        <dbReference type="EC" id="3.5.4.9"/>
    </reaction>
</comment>
<comment type="pathway">
    <text evidence="1">One-carbon metabolism; tetrahydrofolate interconversion.</text>
</comment>
<comment type="subunit">
    <text evidence="1">Homodimer.</text>
</comment>
<comment type="similarity">
    <text evidence="1">Belongs to the tetrahydrofolate dehydrogenase/cyclohydrolase family.</text>
</comment>
<protein>
    <recommendedName>
        <fullName evidence="1">Bifunctional protein FolD</fullName>
    </recommendedName>
    <domain>
        <recommendedName>
            <fullName evidence="1">Methylenetetrahydrofolate dehydrogenase</fullName>
            <ecNumber evidence="1">1.5.1.5</ecNumber>
        </recommendedName>
    </domain>
    <domain>
        <recommendedName>
            <fullName evidence="1">Methenyltetrahydrofolate cyclohydrolase</fullName>
            <ecNumber evidence="1">3.5.4.9</ecNumber>
        </recommendedName>
    </domain>
</protein>
<proteinExistence type="inferred from homology"/>
<sequence length="286" mass="30088">MTALLIDGNALSKTLRAQAAERAAALTARGHQPGLAVILVGANPASEVYVRNKIKACEDNGFFSLKDAYPDTLSEADLLARIDELNRDPKIHGILVQLPLPKHIDSHKVIEAIAPEKDVDGFHIANAGALMTGKPLFRPCTPYGVMKMFEAHDIPLQGANAVVIGRSNIVGKPMAMMLLDAGATVTICHSKTRDLAAHTRQADIVVAAVGKRNILTADMVKPGATVIDVGMNRDDAGKLCGDVDFAGVKEVASHITPVPGGVGPMTITMLLINTIEAAERAADAAA</sequence>
<name>FOLD_BURL3</name>
<accession>Q39ES6</accession>
<reference key="1">
    <citation type="submission" date="2005-10" db="EMBL/GenBank/DDBJ databases">
        <title>Complete sequence of chromosome 1 of Burkholderia sp. 383.</title>
        <authorList>
            <consortium name="US DOE Joint Genome Institute"/>
            <person name="Copeland A."/>
            <person name="Lucas S."/>
            <person name="Lapidus A."/>
            <person name="Barry K."/>
            <person name="Detter J.C."/>
            <person name="Glavina T."/>
            <person name="Hammon N."/>
            <person name="Israni S."/>
            <person name="Pitluck S."/>
            <person name="Chain P."/>
            <person name="Malfatti S."/>
            <person name="Shin M."/>
            <person name="Vergez L."/>
            <person name="Schmutz J."/>
            <person name="Larimer F."/>
            <person name="Land M."/>
            <person name="Kyrpides N."/>
            <person name="Lykidis A."/>
            <person name="Richardson P."/>
        </authorList>
    </citation>
    <scope>NUCLEOTIDE SEQUENCE [LARGE SCALE GENOMIC DNA]</scope>
    <source>
        <strain>ATCC 17760 / DSM 23089 / LMG 22485 / NCIMB 9086 / R18194 / 383</strain>
    </source>
</reference>
<gene>
    <name evidence="1" type="primary">folD</name>
    <name type="ordered locus">Bcep18194_A5446</name>
</gene>
<organism>
    <name type="scientific">Burkholderia lata (strain ATCC 17760 / DSM 23089 / LMG 22485 / NCIMB 9086 / R18194 / 383)</name>
    <dbReference type="NCBI Taxonomy" id="482957"/>
    <lineage>
        <taxon>Bacteria</taxon>
        <taxon>Pseudomonadati</taxon>
        <taxon>Pseudomonadota</taxon>
        <taxon>Betaproteobacteria</taxon>
        <taxon>Burkholderiales</taxon>
        <taxon>Burkholderiaceae</taxon>
        <taxon>Burkholderia</taxon>
        <taxon>Burkholderia cepacia complex</taxon>
    </lineage>
</organism>
<keyword id="KW-0028">Amino-acid biosynthesis</keyword>
<keyword id="KW-0368">Histidine biosynthesis</keyword>
<keyword id="KW-0378">Hydrolase</keyword>
<keyword id="KW-0486">Methionine biosynthesis</keyword>
<keyword id="KW-0511">Multifunctional enzyme</keyword>
<keyword id="KW-0521">NADP</keyword>
<keyword id="KW-0554">One-carbon metabolism</keyword>
<keyword id="KW-0560">Oxidoreductase</keyword>
<keyword id="KW-0658">Purine biosynthesis</keyword>
<feature type="chain" id="PRO_0000268301" description="Bifunctional protein FolD">
    <location>
        <begin position="1"/>
        <end position="286"/>
    </location>
</feature>
<feature type="binding site" evidence="1">
    <location>
        <begin position="165"/>
        <end position="167"/>
    </location>
    <ligand>
        <name>NADP(+)</name>
        <dbReference type="ChEBI" id="CHEBI:58349"/>
    </ligand>
</feature>
<feature type="binding site" evidence="1">
    <location>
        <position position="190"/>
    </location>
    <ligand>
        <name>NADP(+)</name>
        <dbReference type="ChEBI" id="CHEBI:58349"/>
    </ligand>
</feature>
<evidence type="ECO:0000255" key="1">
    <source>
        <dbReference type="HAMAP-Rule" id="MF_01576"/>
    </source>
</evidence>